<gene>
    <name evidence="1" type="primary">rpmF</name>
    <name type="ordered locus">Pden_1859</name>
</gene>
<keyword id="KW-1185">Reference proteome</keyword>
<keyword id="KW-0687">Ribonucleoprotein</keyword>
<keyword id="KW-0689">Ribosomal protein</keyword>
<name>RL32_PARDP</name>
<organism>
    <name type="scientific">Paracoccus denitrificans (strain Pd 1222)</name>
    <dbReference type="NCBI Taxonomy" id="318586"/>
    <lineage>
        <taxon>Bacteria</taxon>
        <taxon>Pseudomonadati</taxon>
        <taxon>Pseudomonadota</taxon>
        <taxon>Alphaproteobacteria</taxon>
        <taxon>Rhodobacterales</taxon>
        <taxon>Paracoccaceae</taxon>
        <taxon>Paracoccus</taxon>
    </lineage>
</organism>
<accession>A1B362</accession>
<dbReference type="EMBL" id="CP000489">
    <property type="protein sequence ID" value="ABL69956.1"/>
    <property type="molecule type" value="Genomic_DNA"/>
</dbReference>
<dbReference type="RefSeq" id="WP_011748153.1">
    <property type="nucleotide sequence ID" value="NC_008686.1"/>
</dbReference>
<dbReference type="SMR" id="A1B362"/>
<dbReference type="STRING" id="318586.Pden_1859"/>
<dbReference type="EnsemblBacteria" id="ABL69956">
    <property type="protein sequence ID" value="ABL69956"/>
    <property type="gene ID" value="Pden_1859"/>
</dbReference>
<dbReference type="GeneID" id="93450255"/>
<dbReference type="KEGG" id="pde:Pden_1859"/>
<dbReference type="eggNOG" id="COG0333">
    <property type="taxonomic scope" value="Bacteria"/>
</dbReference>
<dbReference type="HOGENOM" id="CLU_129084_1_3_5"/>
<dbReference type="OrthoDB" id="9801927at2"/>
<dbReference type="Proteomes" id="UP000000361">
    <property type="component" value="Chromosome 1"/>
</dbReference>
<dbReference type="GO" id="GO:0015934">
    <property type="term" value="C:large ribosomal subunit"/>
    <property type="evidence" value="ECO:0007669"/>
    <property type="project" value="InterPro"/>
</dbReference>
<dbReference type="GO" id="GO:0003735">
    <property type="term" value="F:structural constituent of ribosome"/>
    <property type="evidence" value="ECO:0007669"/>
    <property type="project" value="InterPro"/>
</dbReference>
<dbReference type="GO" id="GO:0006412">
    <property type="term" value="P:translation"/>
    <property type="evidence" value="ECO:0007669"/>
    <property type="project" value="UniProtKB-UniRule"/>
</dbReference>
<dbReference type="Gene3D" id="1.20.5.640">
    <property type="entry name" value="Single helix bin"/>
    <property type="match status" value="1"/>
</dbReference>
<dbReference type="HAMAP" id="MF_00340">
    <property type="entry name" value="Ribosomal_bL32"/>
    <property type="match status" value="1"/>
</dbReference>
<dbReference type="InterPro" id="IPR002677">
    <property type="entry name" value="Ribosomal_bL32"/>
</dbReference>
<dbReference type="InterPro" id="IPR044957">
    <property type="entry name" value="Ribosomal_bL32_bact"/>
</dbReference>
<dbReference type="InterPro" id="IPR011332">
    <property type="entry name" value="Ribosomal_zn-bd"/>
</dbReference>
<dbReference type="NCBIfam" id="TIGR01031">
    <property type="entry name" value="rpmF_bact"/>
    <property type="match status" value="1"/>
</dbReference>
<dbReference type="PANTHER" id="PTHR35534">
    <property type="entry name" value="50S RIBOSOMAL PROTEIN L32"/>
    <property type="match status" value="1"/>
</dbReference>
<dbReference type="PANTHER" id="PTHR35534:SF1">
    <property type="entry name" value="LARGE RIBOSOMAL SUBUNIT PROTEIN BL32"/>
    <property type="match status" value="1"/>
</dbReference>
<dbReference type="Pfam" id="PF01783">
    <property type="entry name" value="Ribosomal_L32p"/>
    <property type="match status" value="1"/>
</dbReference>
<dbReference type="SUPFAM" id="SSF57829">
    <property type="entry name" value="Zn-binding ribosomal proteins"/>
    <property type="match status" value="1"/>
</dbReference>
<proteinExistence type="inferred from homology"/>
<reference key="1">
    <citation type="submission" date="2006-12" db="EMBL/GenBank/DDBJ databases">
        <title>Complete sequence of chromosome 1 of Paracoccus denitrificans PD1222.</title>
        <authorList>
            <person name="Copeland A."/>
            <person name="Lucas S."/>
            <person name="Lapidus A."/>
            <person name="Barry K."/>
            <person name="Detter J.C."/>
            <person name="Glavina del Rio T."/>
            <person name="Hammon N."/>
            <person name="Israni S."/>
            <person name="Dalin E."/>
            <person name="Tice H."/>
            <person name="Pitluck S."/>
            <person name="Munk A.C."/>
            <person name="Brettin T."/>
            <person name="Bruce D."/>
            <person name="Han C."/>
            <person name="Tapia R."/>
            <person name="Gilna P."/>
            <person name="Schmutz J."/>
            <person name="Larimer F."/>
            <person name="Land M."/>
            <person name="Hauser L."/>
            <person name="Kyrpides N."/>
            <person name="Lykidis A."/>
            <person name="Spiro S."/>
            <person name="Richardson D.J."/>
            <person name="Moir J.W.B."/>
            <person name="Ferguson S.J."/>
            <person name="van Spanning R.J.M."/>
            <person name="Richardson P."/>
        </authorList>
    </citation>
    <scope>NUCLEOTIDE SEQUENCE [LARGE SCALE GENOMIC DNA]</scope>
    <source>
        <strain>Pd 1222</strain>
    </source>
</reference>
<protein>
    <recommendedName>
        <fullName evidence="1">Large ribosomal subunit protein bL32</fullName>
    </recommendedName>
    <alternativeName>
        <fullName evidence="3">50S ribosomal protein L32</fullName>
    </alternativeName>
</protein>
<comment type="similarity">
    <text evidence="1">Belongs to the bacterial ribosomal protein bL32 family.</text>
</comment>
<sequence length="68" mass="7555">MAVPQNRVTRSRRNMRRSHDALVAGNPNECSNCGELKRPHHVCPSCGHYADREVVAQANEVDLDEDAA</sequence>
<evidence type="ECO:0000255" key="1">
    <source>
        <dbReference type="HAMAP-Rule" id="MF_00340"/>
    </source>
</evidence>
<evidence type="ECO:0000256" key="2">
    <source>
        <dbReference type="SAM" id="MobiDB-lite"/>
    </source>
</evidence>
<evidence type="ECO:0000305" key="3"/>
<feature type="chain" id="PRO_0000296520" description="Large ribosomal subunit protein bL32">
    <location>
        <begin position="1"/>
        <end position="68"/>
    </location>
</feature>
<feature type="region of interest" description="Disordered" evidence="2">
    <location>
        <begin position="1"/>
        <end position="24"/>
    </location>
</feature>